<protein>
    <recommendedName>
        <fullName evidence="1">Tyrosine recombinase XerC</fullName>
    </recommendedName>
</protein>
<organism>
    <name type="scientific">Anoxybacillus flavithermus (strain DSM 21510 / WK1)</name>
    <dbReference type="NCBI Taxonomy" id="491915"/>
    <lineage>
        <taxon>Bacteria</taxon>
        <taxon>Bacillati</taxon>
        <taxon>Bacillota</taxon>
        <taxon>Bacilli</taxon>
        <taxon>Bacillales</taxon>
        <taxon>Anoxybacillaceae</taxon>
        <taxon>Anoxybacillus</taxon>
    </lineage>
</organism>
<keyword id="KW-0131">Cell cycle</keyword>
<keyword id="KW-0132">Cell division</keyword>
<keyword id="KW-0159">Chromosome partition</keyword>
<keyword id="KW-0963">Cytoplasm</keyword>
<keyword id="KW-0229">DNA integration</keyword>
<keyword id="KW-0233">DNA recombination</keyword>
<keyword id="KW-0238">DNA-binding</keyword>
<sequence length="300" mass="34736">MENVNFTLNLFIEYLQIEKNYSEYTIACYKHDIGEFFEFMEREQIKQLQQVSYSDVRLFLTELHQRKQSSRSIARKMSSLRSFYKFLLREKIVSENPFALASLPKKEQKIPHFLYPDELEQLFVVNDLNTAIGQRNQAMIELLYATGIRVSECCNIRLSHIDFSVCTILISGKGNKQRYVPFGTYAKEALERYIQDGRQQLASKAKTPTDVLFLNARGGALTPRGVRHILNDIVERAALSLKVSPHTFRHTFATHLLNEGADLRSVQELLGHAHLSSTQVYTHVTKDHLRYVYLHSHPRA</sequence>
<reference key="1">
    <citation type="journal article" date="2008" name="Genome Biol.">
        <title>Encapsulated in silica: genome, proteome and physiology of the thermophilic bacterium Anoxybacillus flavithermus WK1.</title>
        <authorList>
            <person name="Saw J.H."/>
            <person name="Mountain B.W."/>
            <person name="Feng L."/>
            <person name="Omelchenko M.V."/>
            <person name="Hou S."/>
            <person name="Saito J.A."/>
            <person name="Stott M.B."/>
            <person name="Li D."/>
            <person name="Zhao G."/>
            <person name="Wu J."/>
            <person name="Galperin M.Y."/>
            <person name="Koonin E.V."/>
            <person name="Makarova K.S."/>
            <person name="Wolf Y.I."/>
            <person name="Rigden D.J."/>
            <person name="Dunfield P.F."/>
            <person name="Wang L."/>
            <person name="Alam M."/>
        </authorList>
    </citation>
    <scope>NUCLEOTIDE SEQUENCE [LARGE SCALE GENOMIC DNA]</scope>
    <source>
        <strain>DSM 21510 / WK1</strain>
    </source>
</reference>
<accession>B7GGC7</accession>
<feature type="chain" id="PRO_1000187581" description="Tyrosine recombinase XerC">
    <location>
        <begin position="1"/>
        <end position="300"/>
    </location>
</feature>
<feature type="domain" description="Core-binding (CB)" evidence="3">
    <location>
        <begin position="2"/>
        <end position="88"/>
    </location>
</feature>
<feature type="domain" description="Tyr recombinase" evidence="2">
    <location>
        <begin position="109"/>
        <end position="294"/>
    </location>
</feature>
<feature type="active site" evidence="1">
    <location>
        <position position="149"/>
    </location>
</feature>
<feature type="active site" evidence="1">
    <location>
        <position position="173"/>
    </location>
</feature>
<feature type="active site" evidence="1">
    <location>
        <position position="246"/>
    </location>
</feature>
<feature type="active site" evidence="1">
    <location>
        <position position="249"/>
    </location>
</feature>
<feature type="active site" evidence="1">
    <location>
        <position position="272"/>
    </location>
</feature>
<feature type="active site" description="O-(3'-phospho-DNA)-tyrosine intermediate" evidence="1">
    <location>
        <position position="281"/>
    </location>
</feature>
<comment type="function">
    <text evidence="1">Site-specific tyrosine recombinase, which acts by catalyzing the cutting and rejoining of the recombining DNA molecules. The XerC-XerD complex is essential to convert dimers of the bacterial chromosome into monomers to permit their segregation at cell division. It also contributes to the segregational stability of plasmids.</text>
</comment>
<comment type="subunit">
    <text evidence="1">Forms a cyclic heterotetrameric complex composed of two molecules of XerC and two molecules of XerD.</text>
</comment>
<comment type="subcellular location">
    <subcellularLocation>
        <location evidence="1">Cytoplasm</location>
    </subcellularLocation>
</comment>
<comment type="similarity">
    <text evidence="1">Belongs to the 'phage' integrase family. XerC subfamily.</text>
</comment>
<name>XERC_ANOFW</name>
<gene>
    <name evidence="1" type="primary">xerC</name>
    <name type="ordered locus">Aflv_1748</name>
</gene>
<evidence type="ECO:0000255" key="1">
    <source>
        <dbReference type="HAMAP-Rule" id="MF_01808"/>
    </source>
</evidence>
<evidence type="ECO:0000255" key="2">
    <source>
        <dbReference type="PROSITE-ProRule" id="PRU01246"/>
    </source>
</evidence>
<evidence type="ECO:0000255" key="3">
    <source>
        <dbReference type="PROSITE-ProRule" id="PRU01248"/>
    </source>
</evidence>
<proteinExistence type="inferred from homology"/>
<dbReference type="EMBL" id="CP000922">
    <property type="protein sequence ID" value="ACJ34109.1"/>
    <property type="molecule type" value="Genomic_DNA"/>
</dbReference>
<dbReference type="RefSeq" id="WP_006323038.1">
    <property type="nucleotide sequence ID" value="NC_011567.1"/>
</dbReference>
<dbReference type="SMR" id="B7GGC7"/>
<dbReference type="STRING" id="491915.Aflv_1748"/>
<dbReference type="GeneID" id="7038001"/>
<dbReference type="KEGG" id="afl:Aflv_1748"/>
<dbReference type="eggNOG" id="COG4974">
    <property type="taxonomic scope" value="Bacteria"/>
</dbReference>
<dbReference type="HOGENOM" id="CLU_027562_9_0_9"/>
<dbReference type="Proteomes" id="UP000000742">
    <property type="component" value="Chromosome"/>
</dbReference>
<dbReference type="GO" id="GO:0005737">
    <property type="term" value="C:cytoplasm"/>
    <property type="evidence" value="ECO:0007669"/>
    <property type="project" value="UniProtKB-SubCell"/>
</dbReference>
<dbReference type="GO" id="GO:0003677">
    <property type="term" value="F:DNA binding"/>
    <property type="evidence" value="ECO:0007669"/>
    <property type="project" value="UniProtKB-KW"/>
</dbReference>
<dbReference type="GO" id="GO:0009037">
    <property type="term" value="F:tyrosine-based site-specific recombinase activity"/>
    <property type="evidence" value="ECO:0007669"/>
    <property type="project" value="UniProtKB-UniRule"/>
</dbReference>
<dbReference type="GO" id="GO:0051301">
    <property type="term" value="P:cell division"/>
    <property type="evidence" value="ECO:0007669"/>
    <property type="project" value="UniProtKB-KW"/>
</dbReference>
<dbReference type="GO" id="GO:0007059">
    <property type="term" value="P:chromosome segregation"/>
    <property type="evidence" value="ECO:0007669"/>
    <property type="project" value="UniProtKB-UniRule"/>
</dbReference>
<dbReference type="GO" id="GO:0006313">
    <property type="term" value="P:DNA transposition"/>
    <property type="evidence" value="ECO:0007669"/>
    <property type="project" value="UniProtKB-UniRule"/>
</dbReference>
<dbReference type="CDD" id="cd00798">
    <property type="entry name" value="INT_XerDC_C"/>
    <property type="match status" value="1"/>
</dbReference>
<dbReference type="Gene3D" id="1.10.150.130">
    <property type="match status" value="1"/>
</dbReference>
<dbReference type="Gene3D" id="1.10.443.10">
    <property type="entry name" value="Intergrase catalytic core"/>
    <property type="match status" value="1"/>
</dbReference>
<dbReference type="HAMAP" id="MF_01808">
    <property type="entry name" value="Recomb_XerC_XerD"/>
    <property type="match status" value="1"/>
</dbReference>
<dbReference type="InterPro" id="IPR044068">
    <property type="entry name" value="CB"/>
</dbReference>
<dbReference type="InterPro" id="IPR011010">
    <property type="entry name" value="DNA_brk_join_enz"/>
</dbReference>
<dbReference type="InterPro" id="IPR013762">
    <property type="entry name" value="Integrase-like_cat_sf"/>
</dbReference>
<dbReference type="InterPro" id="IPR002104">
    <property type="entry name" value="Integrase_catalytic"/>
</dbReference>
<dbReference type="InterPro" id="IPR010998">
    <property type="entry name" value="Integrase_recombinase_N"/>
</dbReference>
<dbReference type="InterPro" id="IPR004107">
    <property type="entry name" value="Integrase_SAM-like_N"/>
</dbReference>
<dbReference type="InterPro" id="IPR011931">
    <property type="entry name" value="Recomb_XerC"/>
</dbReference>
<dbReference type="InterPro" id="IPR011932">
    <property type="entry name" value="Recomb_XerD"/>
</dbReference>
<dbReference type="InterPro" id="IPR023009">
    <property type="entry name" value="Tyrosine_recombinase_XerC/XerD"/>
</dbReference>
<dbReference type="InterPro" id="IPR050090">
    <property type="entry name" value="Tyrosine_recombinase_XerCD"/>
</dbReference>
<dbReference type="NCBIfam" id="NF001399">
    <property type="entry name" value="PRK00283.1"/>
    <property type="match status" value="1"/>
</dbReference>
<dbReference type="NCBIfam" id="NF040815">
    <property type="entry name" value="recomb_XerA_Arch"/>
    <property type="match status" value="1"/>
</dbReference>
<dbReference type="NCBIfam" id="TIGR02224">
    <property type="entry name" value="recomb_XerC"/>
    <property type="match status" value="1"/>
</dbReference>
<dbReference type="NCBIfam" id="TIGR02225">
    <property type="entry name" value="recomb_XerD"/>
    <property type="match status" value="1"/>
</dbReference>
<dbReference type="PANTHER" id="PTHR30349">
    <property type="entry name" value="PHAGE INTEGRASE-RELATED"/>
    <property type="match status" value="1"/>
</dbReference>
<dbReference type="PANTHER" id="PTHR30349:SF77">
    <property type="entry name" value="TYROSINE RECOMBINASE XERC"/>
    <property type="match status" value="1"/>
</dbReference>
<dbReference type="Pfam" id="PF02899">
    <property type="entry name" value="Phage_int_SAM_1"/>
    <property type="match status" value="1"/>
</dbReference>
<dbReference type="Pfam" id="PF00589">
    <property type="entry name" value="Phage_integrase"/>
    <property type="match status" value="1"/>
</dbReference>
<dbReference type="SUPFAM" id="SSF56349">
    <property type="entry name" value="DNA breaking-rejoining enzymes"/>
    <property type="match status" value="1"/>
</dbReference>
<dbReference type="PROSITE" id="PS51900">
    <property type="entry name" value="CB"/>
    <property type="match status" value="1"/>
</dbReference>
<dbReference type="PROSITE" id="PS51898">
    <property type="entry name" value="TYR_RECOMBINASE"/>
    <property type="match status" value="1"/>
</dbReference>